<keyword id="KW-0963">Cytoplasm</keyword>
<keyword id="KW-0444">Lipid biosynthesis</keyword>
<keyword id="KW-0443">Lipid metabolism</keyword>
<keyword id="KW-0460">Magnesium</keyword>
<keyword id="KW-0479">Metal-binding</keyword>
<keyword id="KW-0594">Phospholipid biosynthesis</keyword>
<keyword id="KW-1208">Phospholipid metabolism</keyword>
<keyword id="KW-1185">Reference proteome</keyword>
<keyword id="KW-0808">Transferase</keyword>
<comment type="function">
    <text evidence="1">Prenyltransferase that catalyzes the transfer of the geranylgeranyl moiety of geranylgeranyl diphosphate (GGPP) to the C3 hydroxyl of sn-glycerol-1-phosphate (G1P). This reaction is the first ether-bond-formation step in the biosynthesis of archaeal membrane lipids.</text>
</comment>
<comment type="catalytic activity">
    <reaction evidence="1">
        <text>sn-glycerol 1-phosphate + (2E,6E,10E)-geranylgeranyl diphosphate = sn-3-O-(geranylgeranyl)glycerol 1-phosphate + diphosphate</text>
        <dbReference type="Rhea" id="RHEA:23404"/>
        <dbReference type="ChEBI" id="CHEBI:33019"/>
        <dbReference type="ChEBI" id="CHEBI:57677"/>
        <dbReference type="ChEBI" id="CHEBI:57685"/>
        <dbReference type="ChEBI" id="CHEBI:58756"/>
        <dbReference type="EC" id="2.5.1.41"/>
    </reaction>
</comment>
<comment type="cofactor">
    <cofactor evidence="1">
        <name>Mg(2+)</name>
        <dbReference type="ChEBI" id="CHEBI:18420"/>
    </cofactor>
</comment>
<comment type="pathway">
    <text evidence="1">Membrane lipid metabolism; glycerophospholipid metabolism.</text>
</comment>
<comment type="subcellular location">
    <subcellularLocation>
        <location evidence="1">Cytoplasm</location>
    </subcellularLocation>
</comment>
<comment type="similarity">
    <text evidence="1">Belongs to the GGGP/HepGP synthase family. Group II subfamily.</text>
</comment>
<organism>
    <name type="scientific">Nitrosopumilus maritimus (strain SCM1)</name>
    <dbReference type="NCBI Taxonomy" id="436308"/>
    <lineage>
        <taxon>Archaea</taxon>
        <taxon>Nitrososphaerota</taxon>
        <taxon>Nitrososphaeria</taxon>
        <taxon>Nitrosopumilales</taxon>
        <taxon>Nitrosopumilaceae</taxon>
        <taxon>Nitrosopumilus</taxon>
    </lineage>
</organism>
<reference key="1">
    <citation type="journal article" date="2010" name="Proc. Natl. Acad. Sci. U.S.A.">
        <title>Nitrosopumilus maritimus genome reveals unique mechanisms for nitrification and autotrophy in globally distributed marine crenarchaea.</title>
        <authorList>
            <person name="Walker C.B."/>
            <person name="de la Torre J.R."/>
            <person name="Klotz M.G."/>
            <person name="Urakawa H."/>
            <person name="Pinel N."/>
            <person name="Arp D.J."/>
            <person name="Brochier-Armanet C."/>
            <person name="Chain P.S."/>
            <person name="Chan P.P."/>
            <person name="Gollabgir A."/>
            <person name="Hemp J."/>
            <person name="Hugler M."/>
            <person name="Karr E.A."/>
            <person name="Konneke M."/>
            <person name="Shin M."/>
            <person name="Lawton T.J."/>
            <person name="Lowe T."/>
            <person name="Martens-Habbena W."/>
            <person name="Sayavedra-Soto L.A."/>
            <person name="Lang D."/>
            <person name="Sievert S.M."/>
            <person name="Rosenzweig A.C."/>
            <person name="Manning G."/>
            <person name="Stahl D.A."/>
        </authorList>
    </citation>
    <scope>NUCLEOTIDE SEQUENCE [LARGE SCALE GENOMIC DNA]</scope>
    <source>
        <strain>SCM1</strain>
    </source>
</reference>
<protein>
    <recommendedName>
        <fullName evidence="1">Geranylgeranylglyceryl phosphate synthase</fullName>
        <shortName evidence="1">GGGP synthase</shortName>
        <shortName evidence="1">GGGPS</shortName>
        <ecNumber evidence="1">2.5.1.41</ecNumber>
    </recommendedName>
    <alternativeName>
        <fullName evidence="1">(S)-3-O-geranylgeranylglyceryl phosphate synthase</fullName>
    </alternativeName>
    <alternativeName>
        <fullName evidence="1">Phosphoglycerol geranylgeranyltransferase</fullName>
    </alternativeName>
</protein>
<feature type="chain" id="PRO_0000350686" description="Geranylgeranylglyceryl phosphate synthase">
    <location>
        <begin position="1"/>
        <end position="250"/>
    </location>
</feature>
<feature type="binding site" evidence="1">
    <location>
        <position position="26"/>
    </location>
    <ligand>
        <name>Mg(2+)</name>
        <dbReference type="ChEBI" id="CHEBI:18420"/>
    </ligand>
</feature>
<feature type="binding site" evidence="1">
    <location>
        <position position="55"/>
    </location>
    <ligand>
        <name>Mg(2+)</name>
        <dbReference type="ChEBI" id="CHEBI:18420"/>
    </ligand>
</feature>
<feature type="binding site" evidence="1">
    <location>
        <begin position="174"/>
        <end position="180"/>
    </location>
    <ligand>
        <name>sn-glycerol 1-phosphate</name>
        <dbReference type="ChEBI" id="CHEBI:57685"/>
    </ligand>
</feature>
<feature type="binding site" evidence="1">
    <location>
        <begin position="205"/>
        <end position="206"/>
    </location>
    <ligand>
        <name>sn-glycerol 1-phosphate</name>
        <dbReference type="ChEBI" id="CHEBI:57685"/>
    </ligand>
</feature>
<feature type="binding site" evidence="1">
    <location>
        <begin position="227"/>
        <end position="228"/>
    </location>
    <ligand>
        <name>sn-glycerol 1-phosphate</name>
        <dbReference type="ChEBI" id="CHEBI:57685"/>
    </ligand>
</feature>
<sequence length="250" mass="26319">MAGNKVETFLKSELKKKNALLFVLIDSEVSNLEASAKLAKDVEKIGASAILVGGSSATDQIEMAQVVKGIKKGIKIPIILFPGNVTGVVPDADAILFSSLMNSENPYFITQAQALGAPSVLKFGLEPLPTAYLVIGDGTTAWFVGSARGIPFEKPKIAAAYALAAQFLGMRFVYLEAGSGAKSSVTPEMVKTVRQLFNGFLIVGGGIKDVKTAQNLVKAGADALVIGTFLEKGGSLKKLEEITKAIQRSK</sequence>
<proteinExistence type="inferred from homology"/>
<evidence type="ECO:0000255" key="1">
    <source>
        <dbReference type="HAMAP-Rule" id="MF_00112"/>
    </source>
</evidence>
<name>GGGPS_NITMS</name>
<dbReference type="EC" id="2.5.1.41" evidence="1"/>
<dbReference type="EMBL" id="CP000866">
    <property type="protein sequence ID" value="ABX13691.1"/>
    <property type="molecule type" value="Genomic_DNA"/>
</dbReference>
<dbReference type="RefSeq" id="WP_012216177.1">
    <property type="nucleotide sequence ID" value="NC_010085.1"/>
</dbReference>
<dbReference type="SMR" id="A9A3Z1"/>
<dbReference type="STRING" id="436308.Nmar_1795"/>
<dbReference type="EnsemblBacteria" id="ABX13691">
    <property type="protein sequence ID" value="ABX13691"/>
    <property type="gene ID" value="Nmar_1795"/>
</dbReference>
<dbReference type="GeneID" id="5773353"/>
<dbReference type="KEGG" id="nmr:Nmar_1795"/>
<dbReference type="eggNOG" id="arCOG01085">
    <property type="taxonomic scope" value="Archaea"/>
</dbReference>
<dbReference type="HOGENOM" id="CLU_068610_0_0_2"/>
<dbReference type="InParanoid" id="A9A3Z1"/>
<dbReference type="OrthoDB" id="7409at2157"/>
<dbReference type="PhylomeDB" id="A9A3Z1"/>
<dbReference type="UniPathway" id="UPA00940"/>
<dbReference type="Proteomes" id="UP000000792">
    <property type="component" value="Chromosome"/>
</dbReference>
<dbReference type="GO" id="GO:0005737">
    <property type="term" value="C:cytoplasm"/>
    <property type="evidence" value="ECO:0007669"/>
    <property type="project" value="UniProtKB-SubCell"/>
</dbReference>
<dbReference type="GO" id="GO:0000107">
    <property type="term" value="F:imidazoleglycerol-phosphate synthase activity"/>
    <property type="evidence" value="ECO:0000318"/>
    <property type="project" value="GO_Central"/>
</dbReference>
<dbReference type="GO" id="GO:0000287">
    <property type="term" value="F:magnesium ion binding"/>
    <property type="evidence" value="ECO:0007669"/>
    <property type="project" value="UniProtKB-UniRule"/>
</dbReference>
<dbReference type="GO" id="GO:0047294">
    <property type="term" value="F:phosphoglycerol geranylgeranyltransferase activity"/>
    <property type="evidence" value="ECO:0007669"/>
    <property type="project" value="UniProtKB-UniRule"/>
</dbReference>
<dbReference type="GO" id="GO:0046474">
    <property type="term" value="P:glycerophospholipid biosynthetic process"/>
    <property type="evidence" value="ECO:0007669"/>
    <property type="project" value="UniProtKB-UniRule"/>
</dbReference>
<dbReference type="CDD" id="cd02812">
    <property type="entry name" value="PcrB_like"/>
    <property type="match status" value="1"/>
</dbReference>
<dbReference type="FunFam" id="3.20.20.390:FF:000001">
    <property type="entry name" value="Heptaprenylglyceryl phosphate synthase"/>
    <property type="match status" value="1"/>
</dbReference>
<dbReference type="Gene3D" id="3.20.20.390">
    <property type="entry name" value="FMN-linked oxidoreductases"/>
    <property type="match status" value="1"/>
</dbReference>
<dbReference type="HAMAP" id="MF_00112">
    <property type="entry name" value="GGGP_HepGP_synthase"/>
    <property type="match status" value="1"/>
</dbReference>
<dbReference type="InterPro" id="IPR038597">
    <property type="entry name" value="GGGP/HepGP_synthase_sf"/>
</dbReference>
<dbReference type="InterPro" id="IPR008205">
    <property type="entry name" value="GGGP_HepGP_synthase"/>
</dbReference>
<dbReference type="InterPro" id="IPR010946">
    <property type="entry name" value="GGGP_synth"/>
</dbReference>
<dbReference type="InterPro" id="IPR050064">
    <property type="entry name" value="IGPS_HisA/HisF"/>
</dbReference>
<dbReference type="NCBIfam" id="TIGR01769">
    <property type="entry name" value="GGGP"/>
    <property type="match status" value="1"/>
</dbReference>
<dbReference type="NCBIfam" id="TIGR01768">
    <property type="entry name" value="GGGP-family"/>
    <property type="match status" value="1"/>
</dbReference>
<dbReference type="NCBIfam" id="NF003198">
    <property type="entry name" value="PRK04169.1-2"/>
    <property type="match status" value="1"/>
</dbReference>
<dbReference type="PANTHER" id="PTHR21235:SF22">
    <property type="entry name" value="GERANYLGERANYLGLYCERYL PHOSPHATE SYNTHASE"/>
    <property type="match status" value="1"/>
</dbReference>
<dbReference type="PANTHER" id="PTHR21235">
    <property type="entry name" value="IMIDAZOLE GLYCEROL PHOSPHATE SYNTHASE SUBUNIT HISF/H IGP SYNTHASE SUBUNIT HISF/H"/>
    <property type="match status" value="1"/>
</dbReference>
<dbReference type="Pfam" id="PF01884">
    <property type="entry name" value="PcrB"/>
    <property type="match status" value="1"/>
</dbReference>
<dbReference type="SUPFAM" id="SSF51395">
    <property type="entry name" value="FMN-linked oxidoreductases"/>
    <property type="match status" value="1"/>
</dbReference>
<gene>
    <name type="ordered locus">Nmar_1795</name>
</gene>
<accession>A9A3Z1</accession>